<organism>
    <name type="scientific">Pinus koraiensis</name>
    <name type="common">Korean pine</name>
    <dbReference type="NCBI Taxonomy" id="88728"/>
    <lineage>
        <taxon>Eukaryota</taxon>
        <taxon>Viridiplantae</taxon>
        <taxon>Streptophyta</taxon>
        <taxon>Embryophyta</taxon>
        <taxon>Tracheophyta</taxon>
        <taxon>Spermatophyta</taxon>
        <taxon>Pinopsida</taxon>
        <taxon>Pinidae</taxon>
        <taxon>Conifers I</taxon>
        <taxon>Pinales</taxon>
        <taxon>Pinaceae</taxon>
        <taxon>Pinus</taxon>
        <taxon>Pinus subgen. Strobus</taxon>
    </lineage>
</organism>
<proteinExistence type="inferred from homology"/>
<comment type="subcellular location">
    <subcellularLocation>
        <location>Plastid</location>
        <location>Chloroplast</location>
    </subcellularLocation>
</comment>
<comment type="similarity">
    <text evidence="1">Belongs to the bacterial ribosomal protein bL32 family.</text>
</comment>
<reference key="1">
    <citation type="submission" date="2003-02" db="EMBL/GenBank/DDBJ databases">
        <title>Complete nucleotide sequence of Pinus koraiensis.</title>
        <authorList>
            <person name="Noh E.W."/>
            <person name="Lee J.S."/>
            <person name="Choi Y.I."/>
            <person name="Han M.S."/>
            <person name="Yi Y.S."/>
            <person name="Han S.U."/>
        </authorList>
    </citation>
    <scope>NUCLEOTIDE SEQUENCE [LARGE SCALE GENOMIC DNA]</scope>
    <source>
        <strain>KangWon16</strain>
    </source>
</reference>
<sequence length="71" mass="7781">MAVPKKRTSRSKKKIRKNVRKGKKHIGPAIKAFSLAKSISTGHSKSFYCIVNDDSSGSSESKLTAFDLDDP</sequence>
<protein>
    <recommendedName>
        <fullName evidence="1">Large ribosomal subunit protein bL32c</fullName>
    </recommendedName>
    <alternativeName>
        <fullName evidence="3">50S ribosomal protein L32, chloroplastic</fullName>
    </alternativeName>
</protein>
<evidence type="ECO:0000255" key="1">
    <source>
        <dbReference type="HAMAP-Rule" id="MF_00340"/>
    </source>
</evidence>
<evidence type="ECO:0000256" key="2">
    <source>
        <dbReference type="SAM" id="MobiDB-lite"/>
    </source>
</evidence>
<evidence type="ECO:0000305" key="3"/>
<accession>Q85WV0</accession>
<gene>
    <name evidence="1" type="primary">rpl32</name>
</gene>
<keyword id="KW-0150">Chloroplast</keyword>
<keyword id="KW-0934">Plastid</keyword>
<keyword id="KW-0687">Ribonucleoprotein</keyword>
<keyword id="KW-0689">Ribosomal protein</keyword>
<feature type="chain" id="PRO_0000172473" description="Large ribosomal subunit protein bL32c">
    <location>
        <begin position="1"/>
        <end position="71"/>
    </location>
</feature>
<feature type="region of interest" description="Disordered" evidence="2">
    <location>
        <begin position="1"/>
        <end position="24"/>
    </location>
</feature>
<geneLocation type="chloroplast"/>
<dbReference type="EMBL" id="AY228468">
    <property type="protein sequence ID" value="AAO74119.1"/>
    <property type="molecule type" value="Genomic_DNA"/>
</dbReference>
<dbReference type="RefSeq" id="NP_817289.1">
    <property type="nucleotide sequence ID" value="NC_004677.2"/>
</dbReference>
<dbReference type="SMR" id="Q85WV0"/>
<dbReference type="GeneID" id="806979"/>
<dbReference type="GO" id="GO:0009507">
    <property type="term" value="C:chloroplast"/>
    <property type="evidence" value="ECO:0007669"/>
    <property type="project" value="UniProtKB-SubCell"/>
</dbReference>
<dbReference type="GO" id="GO:0015934">
    <property type="term" value="C:large ribosomal subunit"/>
    <property type="evidence" value="ECO:0007669"/>
    <property type="project" value="InterPro"/>
</dbReference>
<dbReference type="GO" id="GO:0003735">
    <property type="term" value="F:structural constituent of ribosome"/>
    <property type="evidence" value="ECO:0007669"/>
    <property type="project" value="InterPro"/>
</dbReference>
<dbReference type="GO" id="GO:0006412">
    <property type="term" value="P:translation"/>
    <property type="evidence" value="ECO:0007669"/>
    <property type="project" value="UniProtKB-UniRule"/>
</dbReference>
<dbReference type="HAMAP" id="MF_00340">
    <property type="entry name" value="Ribosomal_bL32"/>
    <property type="match status" value="1"/>
</dbReference>
<dbReference type="InterPro" id="IPR002677">
    <property type="entry name" value="Ribosomal_bL32"/>
</dbReference>
<dbReference type="InterPro" id="IPR044958">
    <property type="entry name" value="Ribosomal_bL32_plant/cyanobact"/>
</dbReference>
<dbReference type="PANTHER" id="PTHR36083">
    <property type="entry name" value="50S RIBOSOMAL PROTEIN L32, CHLOROPLASTIC"/>
    <property type="match status" value="1"/>
</dbReference>
<dbReference type="PANTHER" id="PTHR36083:SF1">
    <property type="entry name" value="LARGE RIBOSOMAL SUBUNIT PROTEIN BL32C"/>
    <property type="match status" value="1"/>
</dbReference>
<name>RK32_PINKO</name>